<dbReference type="EC" id="4.2.1.59" evidence="1"/>
<dbReference type="EMBL" id="CP000387">
    <property type="protein sequence ID" value="ABN45308.1"/>
    <property type="molecule type" value="Genomic_DNA"/>
</dbReference>
<dbReference type="RefSeq" id="WP_002922202.1">
    <property type="nucleotide sequence ID" value="NC_009009.1"/>
</dbReference>
<dbReference type="RefSeq" id="YP_001035858.1">
    <property type="nucleotide sequence ID" value="NC_009009.1"/>
</dbReference>
<dbReference type="SMR" id="A3CQ53"/>
<dbReference type="STRING" id="388919.SSA_1933"/>
<dbReference type="KEGG" id="ssa:SSA_1933"/>
<dbReference type="PATRIC" id="fig|388919.9.peg.1832"/>
<dbReference type="eggNOG" id="COG0764">
    <property type="taxonomic scope" value="Bacteria"/>
</dbReference>
<dbReference type="HOGENOM" id="CLU_078912_1_2_9"/>
<dbReference type="OrthoDB" id="9772788at2"/>
<dbReference type="Proteomes" id="UP000002148">
    <property type="component" value="Chromosome"/>
</dbReference>
<dbReference type="GO" id="GO:0005737">
    <property type="term" value="C:cytoplasm"/>
    <property type="evidence" value="ECO:0007669"/>
    <property type="project" value="UniProtKB-SubCell"/>
</dbReference>
<dbReference type="GO" id="GO:0016020">
    <property type="term" value="C:membrane"/>
    <property type="evidence" value="ECO:0007669"/>
    <property type="project" value="GOC"/>
</dbReference>
<dbReference type="GO" id="GO:0019171">
    <property type="term" value="F:(3R)-hydroxyacyl-[acyl-carrier-protein] dehydratase activity"/>
    <property type="evidence" value="ECO:0007669"/>
    <property type="project" value="UniProtKB-EC"/>
</dbReference>
<dbReference type="GO" id="GO:0006633">
    <property type="term" value="P:fatty acid biosynthetic process"/>
    <property type="evidence" value="ECO:0007669"/>
    <property type="project" value="UniProtKB-UniRule"/>
</dbReference>
<dbReference type="GO" id="GO:0009245">
    <property type="term" value="P:lipid A biosynthetic process"/>
    <property type="evidence" value="ECO:0007669"/>
    <property type="project" value="UniProtKB-UniRule"/>
</dbReference>
<dbReference type="CDD" id="cd01288">
    <property type="entry name" value="FabZ"/>
    <property type="match status" value="1"/>
</dbReference>
<dbReference type="FunFam" id="3.10.129.10:FF:000001">
    <property type="entry name" value="3-hydroxyacyl-[acyl-carrier-protein] dehydratase FabZ"/>
    <property type="match status" value="1"/>
</dbReference>
<dbReference type="Gene3D" id="3.10.129.10">
    <property type="entry name" value="Hotdog Thioesterase"/>
    <property type="match status" value="1"/>
</dbReference>
<dbReference type="HAMAP" id="MF_00406">
    <property type="entry name" value="FabZ"/>
    <property type="match status" value="1"/>
</dbReference>
<dbReference type="InterPro" id="IPR013114">
    <property type="entry name" value="FabA_FabZ"/>
</dbReference>
<dbReference type="InterPro" id="IPR010084">
    <property type="entry name" value="FabZ"/>
</dbReference>
<dbReference type="InterPro" id="IPR029069">
    <property type="entry name" value="HotDog_dom_sf"/>
</dbReference>
<dbReference type="NCBIfam" id="TIGR01750">
    <property type="entry name" value="fabZ"/>
    <property type="match status" value="1"/>
</dbReference>
<dbReference type="NCBIfam" id="NF000582">
    <property type="entry name" value="PRK00006.1"/>
    <property type="match status" value="1"/>
</dbReference>
<dbReference type="PANTHER" id="PTHR30272">
    <property type="entry name" value="3-HYDROXYACYL-[ACYL-CARRIER-PROTEIN] DEHYDRATASE"/>
    <property type="match status" value="1"/>
</dbReference>
<dbReference type="PANTHER" id="PTHR30272:SF1">
    <property type="entry name" value="3-HYDROXYACYL-[ACYL-CARRIER-PROTEIN] DEHYDRATASE"/>
    <property type="match status" value="1"/>
</dbReference>
<dbReference type="Pfam" id="PF07977">
    <property type="entry name" value="FabA"/>
    <property type="match status" value="1"/>
</dbReference>
<dbReference type="SUPFAM" id="SSF54637">
    <property type="entry name" value="Thioesterase/thiol ester dehydrase-isomerase"/>
    <property type="match status" value="1"/>
</dbReference>
<keyword id="KW-0963">Cytoplasm</keyword>
<keyword id="KW-0441">Lipid A biosynthesis</keyword>
<keyword id="KW-0444">Lipid biosynthesis</keyword>
<keyword id="KW-0443">Lipid metabolism</keyword>
<keyword id="KW-0456">Lyase</keyword>
<keyword id="KW-1185">Reference proteome</keyword>
<name>FABZ_STRSV</name>
<gene>
    <name evidence="1" type="primary">fabZ</name>
    <name type="ordered locus">SSA_1933</name>
</gene>
<organism>
    <name type="scientific">Streptococcus sanguinis (strain SK36)</name>
    <dbReference type="NCBI Taxonomy" id="388919"/>
    <lineage>
        <taxon>Bacteria</taxon>
        <taxon>Bacillati</taxon>
        <taxon>Bacillota</taxon>
        <taxon>Bacilli</taxon>
        <taxon>Lactobacillales</taxon>
        <taxon>Streptococcaceae</taxon>
        <taxon>Streptococcus</taxon>
    </lineage>
</organism>
<sequence>MIDINSIKEALPHRYPMLLVDRVLEVSEDEIVALKNVTVNEPFFNGHFPQYPVMPGVLIMEALAQTAGVLELSKEENKGKLVFYAGMDKVKFKKQVVPGDQLIMTAKFVKRRGTIAVVEAKAEVDGKLAASGTLTFAIGQ</sequence>
<accession>A3CQ53</accession>
<evidence type="ECO:0000255" key="1">
    <source>
        <dbReference type="HAMAP-Rule" id="MF_00406"/>
    </source>
</evidence>
<feature type="chain" id="PRO_0000301934" description="3-hydroxyacyl-[acyl-carrier-protein] dehydratase FabZ">
    <location>
        <begin position="1"/>
        <end position="140"/>
    </location>
</feature>
<feature type="active site" evidence="1">
    <location>
        <position position="47"/>
    </location>
</feature>
<comment type="function">
    <text evidence="1">Involved in unsaturated fatty acids biosynthesis. Catalyzes the dehydration of short chain beta-hydroxyacyl-ACPs and long chain saturated and unsaturated beta-hydroxyacyl-ACPs.</text>
</comment>
<comment type="catalytic activity">
    <reaction evidence="1">
        <text>a (3R)-hydroxyacyl-[ACP] = a (2E)-enoyl-[ACP] + H2O</text>
        <dbReference type="Rhea" id="RHEA:13097"/>
        <dbReference type="Rhea" id="RHEA-COMP:9925"/>
        <dbReference type="Rhea" id="RHEA-COMP:9945"/>
        <dbReference type="ChEBI" id="CHEBI:15377"/>
        <dbReference type="ChEBI" id="CHEBI:78784"/>
        <dbReference type="ChEBI" id="CHEBI:78827"/>
        <dbReference type="EC" id="4.2.1.59"/>
    </reaction>
</comment>
<comment type="subcellular location">
    <subcellularLocation>
        <location evidence="1">Cytoplasm</location>
    </subcellularLocation>
</comment>
<comment type="similarity">
    <text evidence="1">Belongs to the thioester dehydratase family. FabZ subfamily.</text>
</comment>
<reference key="1">
    <citation type="journal article" date="2007" name="J. Bacteriol.">
        <title>Genome of the opportunistic pathogen Streptococcus sanguinis.</title>
        <authorList>
            <person name="Xu P."/>
            <person name="Alves J.M."/>
            <person name="Kitten T."/>
            <person name="Brown A."/>
            <person name="Chen Z."/>
            <person name="Ozaki L.S."/>
            <person name="Manque P."/>
            <person name="Ge X."/>
            <person name="Serrano M.G."/>
            <person name="Puiu D."/>
            <person name="Hendricks S."/>
            <person name="Wang Y."/>
            <person name="Chaplin M.D."/>
            <person name="Akan D."/>
            <person name="Paik S."/>
            <person name="Peterson D.L."/>
            <person name="Macrina F.L."/>
            <person name="Buck G.A."/>
        </authorList>
    </citation>
    <scope>NUCLEOTIDE SEQUENCE [LARGE SCALE GENOMIC DNA]</scope>
    <source>
        <strain>SK36</strain>
    </source>
</reference>
<protein>
    <recommendedName>
        <fullName evidence="1">3-hydroxyacyl-[acyl-carrier-protein] dehydratase FabZ</fullName>
        <ecNumber evidence="1">4.2.1.59</ecNumber>
    </recommendedName>
    <alternativeName>
        <fullName evidence="1">(3R)-hydroxymyristoyl-[acyl-carrier-protein] dehydratase</fullName>
        <shortName evidence="1">(3R)-hydroxymyristoyl-ACP dehydrase</shortName>
    </alternativeName>
    <alternativeName>
        <fullName evidence="1">Beta-hydroxyacyl-ACP dehydratase</fullName>
    </alternativeName>
</protein>
<proteinExistence type="inferred from homology"/>